<proteinExistence type="evidence at protein level"/>
<comment type="function">
    <text evidence="1">Reversibly catalyzes the regioselective carboxylation of phenol to form salicylic acid. Involved in a pathway for the degradation of salicylate via phenol. Also catalyzes the decarboxylation of beta-resorcylic acid (2,4-dihydroxybenzoic acid) into resorcinol (1,3-dihydroxybenzene), gamma-resorcylic acid (2,6-dihydroxybenzoic acid) into resorcinol, 2,3-dihydroxybenzoic acid into catechol (1,2-dihydroxybenzene), and 4-aminosalicylic acid into 3-aminophenol.</text>
</comment>
<comment type="catalytic activity">
    <reaction evidence="1">
        <text>salicylate + H(+) = phenol + CO2</text>
        <dbReference type="Rhea" id="RHEA:30703"/>
        <dbReference type="ChEBI" id="CHEBI:15378"/>
        <dbReference type="ChEBI" id="CHEBI:15882"/>
        <dbReference type="ChEBI" id="CHEBI:16526"/>
        <dbReference type="ChEBI" id="CHEBI:30762"/>
        <dbReference type="EC" id="4.1.1.91"/>
    </reaction>
</comment>
<comment type="activity regulation">
    <text evidence="1">Inhibited by AgNO(3), HgCl(2), p-chloromercuribenzoic acid and NiCl(2).</text>
</comment>
<comment type="biophysicochemical properties">
    <kinetics>
        <KM evidence="1">1.08 mM for salicylate (at 40 degrees Celsius and pH 5.5)</KM>
        <KM evidence="1">123 mM for phenol (at 30 degrees Celsius)</KM>
        <Vmax evidence="1">12.2 umol/min/mg enzyme for the decarboxylase activity (at 40 degrees Celsius and pH 5.5)</Vmax>
        <Vmax evidence="1">12.3 umol/min/mg enzyme for the carboxylase activity (at 30 degrees Celsius)</Vmax>
    </kinetics>
    <phDependence>
        <text evidence="1">Optimum pH is 5.5 for decarboxylase activity.</text>
    </phDependence>
    <temperatureDependence>
        <text evidence="1">Optimum temperature is 40 degrees Celsius for the decarboxylase activity and 30 degrees Celsius for carboxylase activity.</text>
    </temperatureDependence>
</comment>
<comment type="subunit">
    <text evidence="1">Homotetramer.</text>
</comment>
<comment type="similarity">
    <text evidence="3">Belongs to the metallo-dependent hydrolases superfamily.</text>
</comment>
<sequence>MRGKVSLEEAFELPKFAAQTKEKAELYIAPNNRDRYFEEILNPCGNRLELSNKHGIGYTIYSIYSPGPQGWTERAECEEYARECNDYISGEIANHKDRMGAFAALSMHDPKQASEELTRCVKELGFLGALVNDVQHAGPEGETHIFYDQPEWDIFWQTCVDLDVPFYLHPEPPFGSYLRNQYEGRKYLIGPPVSFANGVSLHVLGMIVNGVFDRFPKLKVILGHLGEHIPGDFWRIEHWFEHCSRPLAKSRGDVFAEKPLLHYFRNNIWLTTSGNFSTETLKFCVEHVGAERILFSVDSPYEHIDVGCGWYDDNAKAIMEAVGGEKAYKDIGRDNAKKLFKLGKFYDSEA</sequence>
<accession>P0CT50</accession>
<name>SDC_CUTMO</name>
<gene>
    <name evidence="2" type="primary">sdc</name>
</gene>
<keyword id="KW-0002">3D-structure</keyword>
<keyword id="KW-0210">Decarboxylase</keyword>
<keyword id="KW-0903">Direct protein sequencing</keyword>
<keyword id="KW-0456">Lyase</keyword>
<reference key="1">
    <citation type="journal article" date="2010" name="Biochem. Biophys. Res. Commun.">
        <title>Enzymatic Kolbe-Schmitt reaction to form salicylic acid from phenol: enzymatic characterization and gene identification of a novel enzyme, Trichosporon moniliiforme salicylic acid decarboxylase.</title>
        <authorList>
            <person name="Kirimura K."/>
            <person name="Gunji H."/>
            <person name="Wakayama R."/>
            <person name="Hattori T."/>
            <person name="Ishii Y."/>
        </authorList>
    </citation>
    <scope>NUCLEOTIDE SEQUENCE [GENOMIC DNA]</scope>
    <scope>PROTEIN SEQUENCE OF 22-31 AND 54-64</scope>
    <scope>FUNCTION</scope>
    <scope>CATALYTIC ACTIVITY</scope>
    <scope>BIOPHYSICOCHEMICAL PROPERTIES</scope>
    <scope>ACTIVITY REGULATION</scope>
    <scope>SUBUNIT</scope>
    <source>
        <strain>WU-0401</strain>
    </source>
</reference>
<evidence type="ECO:0000269" key="1">
    <source>
    </source>
</evidence>
<evidence type="ECO:0000303" key="2">
    <source>
    </source>
</evidence>
<evidence type="ECO:0000305" key="3"/>
<evidence type="ECO:0007829" key="4">
    <source>
        <dbReference type="PDB" id="6JQW"/>
    </source>
</evidence>
<protein>
    <recommendedName>
        <fullName evidence="2">Salicylate decarboxylase</fullName>
        <ecNumber evidence="1">4.1.1.91</ecNumber>
    </recommendedName>
    <alternativeName>
        <fullName evidence="2">Salicylic acid decarboxylase</fullName>
    </alternativeName>
</protein>
<dbReference type="EC" id="4.1.1.91" evidence="1"/>
<dbReference type="EMBL" id="DM040453">
    <property type="status" value="NOT_ANNOTATED_CDS"/>
    <property type="molecule type" value="Genomic_DNA"/>
</dbReference>
<dbReference type="PDB" id="6JQW">
    <property type="method" value="X-ray"/>
    <property type="resolution" value="1.44 A"/>
    <property type="chains" value="A/B=1-350"/>
</dbReference>
<dbReference type="PDB" id="6JQX">
    <property type="method" value="X-ray"/>
    <property type="resolution" value="1.67 A"/>
    <property type="chains" value="A/B=1-350"/>
</dbReference>
<dbReference type="PDB" id="8H41">
    <property type="method" value="X-ray"/>
    <property type="resolution" value="1.78 A"/>
    <property type="chains" value="A/B=1-350"/>
</dbReference>
<dbReference type="PDBsum" id="6JQW"/>
<dbReference type="PDBsum" id="6JQX"/>
<dbReference type="PDBsum" id="8H41"/>
<dbReference type="SMR" id="P0CT50"/>
<dbReference type="BRENDA" id="4.1.1.91">
    <property type="organism ID" value="12167"/>
</dbReference>
<dbReference type="GO" id="GO:0005829">
    <property type="term" value="C:cytosol"/>
    <property type="evidence" value="ECO:0007669"/>
    <property type="project" value="TreeGrafter"/>
</dbReference>
<dbReference type="GO" id="GO:0016831">
    <property type="term" value="F:carboxy-lyase activity"/>
    <property type="evidence" value="ECO:0007669"/>
    <property type="project" value="UniProtKB-KW"/>
</dbReference>
<dbReference type="GO" id="GO:0016787">
    <property type="term" value="F:hydrolase activity"/>
    <property type="evidence" value="ECO:0007669"/>
    <property type="project" value="InterPro"/>
</dbReference>
<dbReference type="GO" id="GO:0019748">
    <property type="term" value="P:secondary metabolic process"/>
    <property type="evidence" value="ECO:0007669"/>
    <property type="project" value="TreeGrafter"/>
</dbReference>
<dbReference type="Gene3D" id="3.20.20.140">
    <property type="entry name" value="Metal-dependent hydrolases"/>
    <property type="match status" value="1"/>
</dbReference>
<dbReference type="InterPro" id="IPR032465">
    <property type="entry name" value="ACMSD"/>
</dbReference>
<dbReference type="InterPro" id="IPR006680">
    <property type="entry name" value="Amidohydro-rel"/>
</dbReference>
<dbReference type="InterPro" id="IPR032466">
    <property type="entry name" value="Metal_Hydrolase"/>
</dbReference>
<dbReference type="PANTHER" id="PTHR21240">
    <property type="entry name" value="2-AMINO-3-CARBOXYLMUCONATE-6-SEMIALDEHYDE DECARBOXYLASE"/>
    <property type="match status" value="1"/>
</dbReference>
<dbReference type="PANTHER" id="PTHR21240:SF31">
    <property type="entry name" value="AMIDOHYDROLASE FAMILY PROTEIN (AFU_ORTHOLOGUE AFUA_7G05840)"/>
    <property type="match status" value="1"/>
</dbReference>
<dbReference type="Pfam" id="PF04909">
    <property type="entry name" value="Amidohydro_2"/>
    <property type="match status" value="1"/>
</dbReference>
<dbReference type="SUPFAM" id="SSF51556">
    <property type="entry name" value="Metallo-dependent hydrolases"/>
    <property type="match status" value="1"/>
</dbReference>
<organism>
    <name type="scientific">Cutaneotrichosporon moniliiforme</name>
    <name type="common">Yeast</name>
    <name type="synonym">Trichosporon moniliiforme</name>
    <dbReference type="NCBI Taxonomy" id="1895941"/>
    <lineage>
        <taxon>Eukaryota</taxon>
        <taxon>Fungi</taxon>
        <taxon>Dikarya</taxon>
        <taxon>Basidiomycota</taxon>
        <taxon>Agaricomycotina</taxon>
        <taxon>Tremellomycetes</taxon>
        <taxon>Trichosporonales</taxon>
        <taxon>Trichosporonaceae</taxon>
        <taxon>Cutaneotrichosporon</taxon>
    </lineage>
</organism>
<feature type="chain" id="PRO_0000431293" description="Salicylate decarboxylase">
    <location>
        <begin position="1"/>
        <end position="350"/>
    </location>
</feature>
<feature type="sequence conflict" description="In Ref. 1; AA sequence." ref="1">
    <original>E</original>
    <variation>V</variation>
    <location>
        <position position="22"/>
    </location>
</feature>
<feature type="sequence conflict" description="In Ref. 1; AA sequence." ref="1">
    <original>H</original>
    <variation>V</variation>
    <location>
        <position position="54"/>
    </location>
</feature>
<feature type="sequence conflict" description="In Ref. 1; AA sequence." ref="1">
    <original>S</original>
    <variation>L</variation>
    <location>
        <position position="62"/>
    </location>
</feature>
<feature type="strand" evidence="4">
    <location>
        <begin position="4"/>
        <end position="11"/>
    </location>
</feature>
<feature type="helix" evidence="4">
    <location>
        <begin position="14"/>
        <end position="16"/>
    </location>
</feature>
<feature type="helix" evidence="4">
    <location>
        <begin position="17"/>
        <end position="27"/>
    </location>
</feature>
<feature type="helix" evidence="4">
    <location>
        <begin position="30"/>
        <end position="32"/>
    </location>
</feature>
<feature type="helix" evidence="4">
    <location>
        <begin position="33"/>
        <end position="40"/>
    </location>
</feature>
<feature type="helix" evidence="4">
    <location>
        <begin position="46"/>
        <end position="53"/>
    </location>
</feature>
<feature type="strand" evidence="4">
    <location>
        <begin position="56"/>
        <end position="63"/>
    </location>
</feature>
<feature type="helix" evidence="4">
    <location>
        <begin position="67"/>
        <end position="70"/>
    </location>
</feature>
<feature type="helix" evidence="4">
    <location>
        <begin position="74"/>
        <end position="92"/>
    </location>
</feature>
<feature type="helix" evidence="4">
    <location>
        <begin position="93"/>
        <end position="95"/>
    </location>
</feature>
<feature type="turn" evidence="4">
    <location>
        <begin position="96"/>
        <end position="98"/>
    </location>
</feature>
<feature type="strand" evidence="4">
    <location>
        <begin position="99"/>
        <end position="101"/>
    </location>
</feature>
<feature type="helix" evidence="4">
    <location>
        <begin position="110"/>
        <end position="124"/>
    </location>
</feature>
<feature type="strand" evidence="4">
    <location>
        <begin position="129"/>
        <end position="131"/>
    </location>
</feature>
<feature type="strand" evidence="4">
    <location>
        <begin position="133"/>
        <end position="138"/>
    </location>
</feature>
<feature type="helix" evidence="4">
    <location>
        <begin position="139"/>
        <end position="141"/>
    </location>
</feature>
<feature type="strand" evidence="4">
    <location>
        <begin position="143"/>
        <end position="145"/>
    </location>
</feature>
<feature type="helix" evidence="4">
    <location>
        <begin position="150"/>
        <end position="152"/>
    </location>
</feature>
<feature type="helix" evidence="4">
    <location>
        <begin position="153"/>
        <end position="162"/>
    </location>
</feature>
<feature type="strand" evidence="4">
    <location>
        <begin position="166"/>
        <end position="168"/>
    </location>
</feature>
<feature type="helix" evidence="4">
    <location>
        <begin position="175"/>
        <end position="182"/>
    </location>
</feature>
<feature type="helix" evidence="4">
    <location>
        <begin position="183"/>
        <end position="188"/>
    </location>
</feature>
<feature type="turn" evidence="4">
    <location>
        <begin position="189"/>
        <end position="193"/>
    </location>
</feature>
<feature type="helix" evidence="4">
    <location>
        <begin position="194"/>
        <end position="208"/>
    </location>
</feature>
<feature type="helix" evidence="4">
    <location>
        <begin position="211"/>
        <end position="214"/>
    </location>
</feature>
<feature type="strand" evidence="4">
    <location>
        <begin position="220"/>
        <end position="223"/>
    </location>
</feature>
<feature type="helix" evidence="4">
    <location>
        <begin position="224"/>
        <end position="226"/>
    </location>
</feature>
<feature type="turn" evidence="4">
    <location>
        <begin position="227"/>
        <end position="229"/>
    </location>
</feature>
<feature type="helix" evidence="4">
    <location>
        <begin position="230"/>
        <end position="232"/>
    </location>
</feature>
<feature type="helix" evidence="4">
    <location>
        <begin position="233"/>
        <end position="242"/>
    </location>
</feature>
<feature type="helix" evidence="4">
    <location>
        <begin position="244"/>
        <end position="250"/>
    </location>
</feature>
<feature type="helix" evidence="4">
    <location>
        <begin position="260"/>
        <end position="266"/>
    </location>
</feature>
<feature type="strand" evidence="4">
    <location>
        <begin position="268"/>
        <end position="271"/>
    </location>
</feature>
<feature type="helix" evidence="4">
    <location>
        <begin position="278"/>
        <end position="288"/>
    </location>
</feature>
<feature type="helix" evidence="4">
    <location>
        <begin position="290"/>
        <end position="292"/>
    </location>
</feature>
<feature type="turn" evidence="4">
    <location>
        <begin position="299"/>
        <end position="301"/>
    </location>
</feature>
<feature type="helix" evidence="4">
    <location>
        <begin position="304"/>
        <end position="313"/>
    </location>
</feature>
<feature type="helix" evidence="4">
    <location>
        <begin position="315"/>
        <end position="322"/>
    </location>
</feature>
<feature type="helix" evidence="4">
    <location>
        <begin position="325"/>
        <end position="332"/>
    </location>
</feature>
<feature type="helix" evidence="4">
    <location>
        <begin position="334"/>
        <end position="339"/>
    </location>
</feature>
<feature type="turn" evidence="4">
    <location>
        <begin position="346"/>
        <end position="349"/>
    </location>
</feature>